<accession>B1XJD2</accession>
<protein>
    <recommendedName>
        <fullName evidence="1">Ribonuclease P protein component</fullName>
        <shortName evidence="1">RNase P protein</shortName>
        <shortName evidence="1">RNaseP protein</shortName>
        <ecNumber evidence="1">3.1.26.5</ecNumber>
    </recommendedName>
    <alternativeName>
        <fullName evidence="1">Protein C5</fullName>
    </alternativeName>
</protein>
<reference key="1">
    <citation type="submission" date="2008-02" db="EMBL/GenBank/DDBJ databases">
        <title>Complete sequence of Synechococcus sp. PCC 7002.</title>
        <authorList>
            <person name="Li T."/>
            <person name="Zhao J."/>
            <person name="Zhao C."/>
            <person name="Liu Z."/>
            <person name="Zhao F."/>
            <person name="Marquardt J."/>
            <person name="Nomura C.T."/>
            <person name="Persson S."/>
            <person name="Detter J.C."/>
            <person name="Richardson P.M."/>
            <person name="Lanz C."/>
            <person name="Schuster S.C."/>
            <person name="Wang J."/>
            <person name="Li S."/>
            <person name="Huang X."/>
            <person name="Cai T."/>
            <person name="Yu Z."/>
            <person name="Luo J."/>
            <person name="Zhao J."/>
            <person name="Bryant D.A."/>
        </authorList>
    </citation>
    <scope>NUCLEOTIDE SEQUENCE [LARGE SCALE GENOMIC DNA]</scope>
    <source>
        <strain>ATCC 27264 / PCC 7002 / PR-6</strain>
    </source>
</reference>
<comment type="function">
    <text evidence="1">RNaseP catalyzes the removal of the 5'-leader sequence from pre-tRNA to produce the mature 5'-terminus. It can also cleave other RNA substrates such as 4.5S RNA. The protein component plays an auxiliary but essential role in vivo by binding to the 5'-leader sequence and broadening the substrate specificity of the ribozyme.</text>
</comment>
<comment type="catalytic activity">
    <reaction evidence="1">
        <text>Endonucleolytic cleavage of RNA, removing 5'-extranucleotides from tRNA precursor.</text>
        <dbReference type="EC" id="3.1.26.5"/>
    </reaction>
</comment>
<comment type="subunit">
    <text evidence="1">Consists of a catalytic RNA component (M1 or rnpB) and a protein subunit.</text>
</comment>
<comment type="similarity">
    <text evidence="1">Belongs to the RnpA family.</text>
</comment>
<dbReference type="EC" id="3.1.26.5" evidence="1"/>
<dbReference type="EMBL" id="CP000951">
    <property type="protein sequence ID" value="ACA98992.1"/>
    <property type="molecule type" value="Genomic_DNA"/>
</dbReference>
<dbReference type="RefSeq" id="WP_012306616.1">
    <property type="nucleotide sequence ID" value="NZ_JAHHPU010000001.1"/>
</dbReference>
<dbReference type="SMR" id="B1XJD2"/>
<dbReference type="STRING" id="32049.SYNPCC7002_A0989"/>
<dbReference type="KEGG" id="syp:SYNPCC7002_A0989"/>
<dbReference type="eggNOG" id="COG0594">
    <property type="taxonomic scope" value="Bacteria"/>
</dbReference>
<dbReference type="HOGENOM" id="CLU_117179_9_0_3"/>
<dbReference type="Proteomes" id="UP000001688">
    <property type="component" value="Chromosome"/>
</dbReference>
<dbReference type="GO" id="GO:0030677">
    <property type="term" value="C:ribonuclease P complex"/>
    <property type="evidence" value="ECO:0007669"/>
    <property type="project" value="TreeGrafter"/>
</dbReference>
<dbReference type="GO" id="GO:0042781">
    <property type="term" value="F:3'-tRNA processing endoribonuclease activity"/>
    <property type="evidence" value="ECO:0007669"/>
    <property type="project" value="TreeGrafter"/>
</dbReference>
<dbReference type="GO" id="GO:0004526">
    <property type="term" value="F:ribonuclease P activity"/>
    <property type="evidence" value="ECO:0007669"/>
    <property type="project" value="UniProtKB-UniRule"/>
</dbReference>
<dbReference type="GO" id="GO:0000049">
    <property type="term" value="F:tRNA binding"/>
    <property type="evidence" value="ECO:0007669"/>
    <property type="project" value="UniProtKB-UniRule"/>
</dbReference>
<dbReference type="GO" id="GO:0001682">
    <property type="term" value="P:tRNA 5'-leader removal"/>
    <property type="evidence" value="ECO:0007669"/>
    <property type="project" value="UniProtKB-UniRule"/>
</dbReference>
<dbReference type="Gene3D" id="3.30.230.10">
    <property type="match status" value="1"/>
</dbReference>
<dbReference type="HAMAP" id="MF_00227">
    <property type="entry name" value="RNase_P"/>
    <property type="match status" value="1"/>
</dbReference>
<dbReference type="InterPro" id="IPR020568">
    <property type="entry name" value="Ribosomal_Su5_D2-typ_SF"/>
</dbReference>
<dbReference type="InterPro" id="IPR014721">
    <property type="entry name" value="Ribsml_uS5_D2-typ_fold_subgr"/>
</dbReference>
<dbReference type="InterPro" id="IPR000100">
    <property type="entry name" value="RNase_P"/>
</dbReference>
<dbReference type="InterPro" id="IPR020539">
    <property type="entry name" value="RNase_P_CS"/>
</dbReference>
<dbReference type="NCBIfam" id="TIGR00188">
    <property type="entry name" value="rnpA"/>
    <property type="match status" value="1"/>
</dbReference>
<dbReference type="PANTHER" id="PTHR33992">
    <property type="entry name" value="RIBONUCLEASE P PROTEIN COMPONENT"/>
    <property type="match status" value="1"/>
</dbReference>
<dbReference type="PANTHER" id="PTHR33992:SF1">
    <property type="entry name" value="RIBONUCLEASE P PROTEIN COMPONENT"/>
    <property type="match status" value="1"/>
</dbReference>
<dbReference type="Pfam" id="PF00825">
    <property type="entry name" value="Ribonuclease_P"/>
    <property type="match status" value="1"/>
</dbReference>
<dbReference type="SUPFAM" id="SSF54211">
    <property type="entry name" value="Ribosomal protein S5 domain 2-like"/>
    <property type="match status" value="1"/>
</dbReference>
<dbReference type="PROSITE" id="PS00648">
    <property type="entry name" value="RIBONUCLEASE_P"/>
    <property type="match status" value="1"/>
</dbReference>
<name>RNPA_PICP2</name>
<proteinExistence type="inferred from homology"/>
<feature type="chain" id="PRO_1000100402" description="Ribonuclease P protein component">
    <location>
        <begin position="1"/>
        <end position="116"/>
    </location>
</feature>
<keyword id="KW-0255">Endonuclease</keyword>
<keyword id="KW-0378">Hydrolase</keyword>
<keyword id="KW-0540">Nuclease</keyword>
<keyword id="KW-1185">Reference proteome</keyword>
<keyword id="KW-0694">RNA-binding</keyword>
<keyword id="KW-0819">tRNA processing</keyword>
<gene>
    <name evidence="1" type="primary">rnpA</name>
    <name type="ordered locus">SYNPCC7002_A0989</name>
</gene>
<evidence type="ECO:0000255" key="1">
    <source>
        <dbReference type="HAMAP-Rule" id="MF_00227"/>
    </source>
</evidence>
<sequence length="116" mass="13607">MGLPKEHRLKHWRDFKTIYSQGKRFRGDALAIILLPQPAAPTKIGISISRKVSKKAVVRNLIKRRIRHACRTLLPQIQPGWHIVIAVRYNARECEYEHFLQELKRLLIQAEVFHGH</sequence>
<organism>
    <name type="scientific">Picosynechococcus sp. (strain ATCC 27264 / PCC 7002 / PR-6)</name>
    <name type="common">Agmenellum quadruplicatum</name>
    <dbReference type="NCBI Taxonomy" id="32049"/>
    <lineage>
        <taxon>Bacteria</taxon>
        <taxon>Bacillati</taxon>
        <taxon>Cyanobacteriota</taxon>
        <taxon>Cyanophyceae</taxon>
        <taxon>Oscillatoriophycideae</taxon>
        <taxon>Chroococcales</taxon>
        <taxon>Geminocystaceae</taxon>
        <taxon>Picosynechococcus</taxon>
    </lineage>
</organism>